<gene>
    <name evidence="1" type="primary">recF</name>
    <name type="ordered locus">FTN_0734</name>
</gene>
<keyword id="KW-0067">ATP-binding</keyword>
<keyword id="KW-0963">Cytoplasm</keyword>
<keyword id="KW-0227">DNA damage</keyword>
<keyword id="KW-0234">DNA repair</keyword>
<keyword id="KW-0235">DNA replication</keyword>
<keyword id="KW-0238">DNA-binding</keyword>
<keyword id="KW-0547">Nucleotide-binding</keyword>
<keyword id="KW-0742">SOS response</keyword>
<sequence>MYISNLRLQNFRNIPAKSFDFKNSINFIVGKNGSGKTSILESIYFLSHSRSFRSSQLNRIINHNADEFIIYTKAYNPDEITISLSRKKNSNNISKLNLEIQKNHTEITRNLPIQLINPESFNIINSGAQQRCKVLDWGAFYLDKTFLKIWQQTKFLVKQRNSALKQNYPYSYILSIDKKLCEFAEILDYKRHAYFTKLKPKIYEILSHFNPNLQLDIDYFRGWNLHKSLAQVLEESFNYDNKYKVTNHGPHKADIVLSVSHKPIQDIFSRGQQKLLICALKLAQGEIHNSENDNKCIYLIDDITSELDSIHTLTLFNYLKQLKSQVFITTTEKNKINEFIDTNSYILEI</sequence>
<reference key="1">
    <citation type="journal article" date="2007" name="Genome Biol.">
        <title>Comparison of Francisella tularensis genomes reveals evolutionary events associated with the emergence of human pathogenic strains.</title>
        <authorList>
            <person name="Rohmer L."/>
            <person name="Fong C."/>
            <person name="Abmayr S."/>
            <person name="Wasnick M."/>
            <person name="Larson Freeman T.J."/>
            <person name="Radey M."/>
            <person name="Guina T."/>
            <person name="Svensson K."/>
            <person name="Hayden H.S."/>
            <person name="Jacobs M."/>
            <person name="Gallagher L.A."/>
            <person name="Manoil C."/>
            <person name="Ernst R.K."/>
            <person name="Drees B."/>
            <person name="Buckley D."/>
            <person name="Haugen E."/>
            <person name="Bovee D."/>
            <person name="Zhou Y."/>
            <person name="Chang J."/>
            <person name="Levy R."/>
            <person name="Lim R."/>
            <person name="Gillett W."/>
            <person name="Guenthener D."/>
            <person name="Kang A."/>
            <person name="Shaffer S.A."/>
            <person name="Taylor G."/>
            <person name="Chen J."/>
            <person name="Gallis B."/>
            <person name="D'Argenio D.A."/>
            <person name="Forsman M."/>
            <person name="Olson M.V."/>
            <person name="Goodlett D.R."/>
            <person name="Kaul R."/>
            <person name="Miller S.I."/>
            <person name="Brittnacher M.J."/>
        </authorList>
    </citation>
    <scope>NUCLEOTIDE SEQUENCE [LARGE SCALE GENOMIC DNA]</scope>
    <source>
        <strain>U112</strain>
    </source>
</reference>
<accession>A0Q5W0</accession>
<comment type="function">
    <text evidence="1">The RecF protein is involved in DNA metabolism; it is required for DNA replication and normal SOS inducibility. RecF binds preferentially to single-stranded, linear DNA. It also seems to bind ATP.</text>
</comment>
<comment type="subcellular location">
    <subcellularLocation>
        <location evidence="1">Cytoplasm</location>
    </subcellularLocation>
</comment>
<comment type="similarity">
    <text evidence="1">Belongs to the RecF family.</text>
</comment>
<feature type="chain" id="PRO_1000205490" description="DNA replication and repair protein RecF">
    <location>
        <begin position="1"/>
        <end position="349"/>
    </location>
</feature>
<feature type="binding site" evidence="1">
    <location>
        <begin position="30"/>
        <end position="37"/>
    </location>
    <ligand>
        <name>ATP</name>
        <dbReference type="ChEBI" id="CHEBI:30616"/>
    </ligand>
</feature>
<proteinExistence type="inferred from homology"/>
<name>RECF_FRATN</name>
<protein>
    <recommendedName>
        <fullName evidence="1">DNA replication and repair protein RecF</fullName>
    </recommendedName>
</protein>
<organism>
    <name type="scientific">Francisella tularensis subsp. novicida (strain U112)</name>
    <dbReference type="NCBI Taxonomy" id="401614"/>
    <lineage>
        <taxon>Bacteria</taxon>
        <taxon>Pseudomonadati</taxon>
        <taxon>Pseudomonadota</taxon>
        <taxon>Gammaproteobacteria</taxon>
        <taxon>Thiotrichales</taxon>
        <taxon>Francisellaceae</taxon>
        <taxon>Francisella</taxon>
    </lineage>
</organism>
<dbReference type="EMBL" id="CP000439">
    <property type="protein sequence ID" value="ABK89625.1"/>
    <property type="molecule type" value="Genomic_DNA"/>
</dbReference>
<dbReference type="RefSeq" id="WP_003033568.1">
    <property type="nucleotide sequence ID" value="NZ_CP009633.1"/>
</dbReference>
<dbReference type="SMR" id="A0Q5W0"/>
<dbReference type="GeneID" id="75263778"/>
<dbReference type="KEGG" id="ftn:FTN_0734"/>
<dbReference type="KEGG" id="ftx:AW25_1287"/>
<dbReference type="BioCyc" id="FTUL401614:G1G75-766-MONOMER"/>
<dbReference type="Proteomes" id="UP000000762">
    <property type="component" value="Chromosome"/>
</dbReference>
<dbReference type="GO" id="GO:0005737">
    <property type="term" value="C:cytoplasm"/>
    <property type="evidence" value="ECO:0007669"/>
    <property type="project" value="UniProtKB-SubCell"/>
</dbReference>
<dbReference type="GO" id="GO:0005524">
    <property type="term" value="F:ATP binding"/>
    <property type="evidence" value="ECO:0007669"/>
    <property type="project" value="UniProtKB-UniRule"/>
</dbReference>
<dbReference type="GO" id="GO:0003697">
    <property type="term" value="F:single-stranded DNA binding"/>
    <property type="evidence" value="ECO:0007669"/>
    <property type="project" value="UniProtKB-UniRule"/>
</dbReference>
<dbReference type="GO" id="GO:0006260">
    <property type="term" value="P:DNA replication"/>
    <property type="evidence" value="ECO:0007669"/>
    <property type="project" value="UniProtKB-UniRule"/>
</dbReference>
<dbReference type="GO" id="GO:0000731">
    <property type="term" value="P:DNA synthesis involved in DNA repair"/>
    <property type="evidence" value="ECO:0007669"/>
    <property type="project" value="TreeGrafter"/>
</dbReference>
<dbReference type="GO" id="GO:0006302">
    <property type="term" value="P:double-strand break repair"/>
    <property type="evidence" value="ECO:0007669"/>
    <property type="project" value="TreeGrafter"/>
</dbReference>
<dbReference type="GO" id="GO:0009432">
    <property type="term" value="P:SOS response"/>
    <property type="evidence" value="ECO:0007669"/>
    <property type="project" value="UniProtKB-UniRule"/>
</dbReference>
<dbReference type="Gene3D" id="3.40.50.300">
    <property type="entry name" value="P-loop containing nucleotide triphosphate hydrolases"/>
    <property type="match status" value="1"/>
</dbReference>
<dbReference type="Gene3D" id="1.20.1050.90">
    <property type="entry name" value="RecF/RecN/SMC, N-terminal domain"/>
    <property type="match status" value="1"/>
</dbReference>
<dbReference type="HAMAP" id="MF_00365">
    <property type="entry name" value="RecF"/>
    <property type="match status" value="1"/>
</dbReference>
<dbReference type="InterPro" id="IPR001238">
    <property type="entry name" value="DNA-binding_RecF"/>
</dbReference>
<dbReference type="InterPro" id="IPR018078">
    <property type="entry name" value="DNA-binding_RecF_CS"/>
</dbReference>
<dbReference type="InterPro" id="IPR027417">
    <property type="entry name" value="P-loop_NTPase"/>
</dbReference>
<dbReference type="InterPro" id="IPR003395">
    <property type="entry name" value="RecF/RecN/SMC_N"/>
</dbReference>
<dbReference type="InterPro" id="IPR042174">
    <property type="entry name" value="RecF_2"/>
</dbReference>
<dbReference type="NCBIfam" id="TIGR00611">
    <property type="entry name" value="recf"/>
    <property type="match status" value="1"/>
</dbReference>
<dbReference type="PANTHER" id="PTHR32182">
    <property type="entry name" value="DNA REPLICATION AND REPAIR PROTEIN RECF"/>
    <property type="match status" value="1"/>
</dbReference>
<dbReference type="PANTHER" id="PTHR32182:SF0">
    <property type="entry name" value="DNA REPLICATION AND REPAIR PROTEIN RECF"/>
    <property type="match status" value="1"/>
</dbReference>
<dbReference type="Pfam" id="PF02463">
    <property type="entry name" value="SMC_N"/>
    <property type="match status" value="1"/>
</dbReference>
<dbReference type="SUPFAM" id="SSF52540">
    <property type="entry name" value="P-loop containing nucleoside triphosphate hydrolases"/>
    <property type="match status" value="1"/>
</dbReference>
<dbReference type="PROSITE" id="PS00618">
    <property type="entry name" value="RECF_2"/>
    <property type="match status" value="1"/>
</dbReference>
<evidence type="ECO:0000255" key="1">
    <source>
        <dbReference type="HAMAP-Rule" id="MF_00365"/>
    </source>
</evidence>